<evidence type="ECO:0000255" key="1"/>
<evidence type="ECO:0000255" key="2">
    <source>
        <dbReference type="PROSITE-ProRule" id="PRU10055"/>
    </source>
</evidence>
<evidence type="ECO:0000305" key="3"/>
<evidence type="ECO:0007829" key="4">
    <source>
        <dbReference type="PDB" id="2O9P"/>
    </source>
</evidence>
<reference key="1">
    <citation type="journal article" date="1990" name="Gene">
        <title>Sequences and homology analysis of two genes encoding beta-glucosidases from Bacillus polymyxa.</title>
        <authorList>
            <person name="Gonzalez-Candelas L."/>
            <person name="Ramon D."/>
            <person name="Polaina J."/>
        </authorList>
    </citation>
    <scope>NUCLEOTIDE SEQUENCE [GENOMIC DNA]</scope>
</reference>
<protein>
    <recommendedName>
        <fullName>Beta-glucosidase B</fullName>
        <ecNumber>3.2.1.21</ecNumber>
    </recommendedName>
    <alternativeName>
        <fullName>Amygdalase</fullName>
    </alternativeName>
    <alternativeName>
        <fullName>Beta-D-glucoside glucohydrolase</fullName>
    </alternativeName>
    <alternativeName>
        <fullName>Cellobiase</fullName>
    </alternativeName>
    <alternativeName>
        <fullName>Gentiobiase</fullName>
    </alternativeName>
</protein>
<gene>
    <name type="primary">bglB</name>
</gene>
<comment type="catalytic activity">
    <reaction>
        <text>Hydrolysis of terminal, non-reducing beta-D-glucosyl residues with release of beta-D-glucose.</text>
        <dbReference type="EC" id="3.2.1.21"/>
    </reaction>
</comment>
<comment type="similarity">
    <text evidence="3">Belongs to the glycosyl hydrolase 1 family.</text>
</comment>
<sequence length="448" mass="51573">MSENTFIFPATFMWGTSTSSYQIEGGTDEGGRTPSIWDTFCQIPGKVIGGDCGDVACDHFHHFKEDVQLMKQLGFLHYRFSVAWPRIMPAAGIINEEGLLFYEHLLDEIELAGLIPMLTLYHWDLPQWIEDEGGWTQRETIQHFKTYASVIMDRFGERINWWNTINEPYCASILGYGTGEHAPGHENWREAFTAAHHILMCHGIASNLHKEKGLTGKIGITLNMEHVDAASERPEDVAAAIRRDGFINRWFAEPLFNGKYPEDMVEWYGTYLNGLDFVQPGDMELIQQPGDFLGINYYTRSIIRSTNDASLLQVEQVHMEEPVTDMGWEIHPESFYKLLTRIEKDFSKGLPILITENGAAMRDELVNGQIEDTGRHGYIEEHLKACHRFIEEGGQLKGYFVWSFLDNFEWAWGYSKRFGIVHINYETQERTPKQSALWFKQMMAKNGF</sequence>
<dbReference type="EC" id="3.2.1.21"/>
<dbReference type="EMBL" id="M60211">
    <property type="protein sequence ID" value="AAA22264.1"/>
    <property type="molecule type" value="Genomic_DNA"/>
</dbReference>
<dbReference type="PIR" id="JW0038">
    <property type="entry name" value="JW0038"/>
</dbReference>
<dbReference type="PDB" id="2JIE">
    <property type="method" value="X-ray"/>
    <property type="resolution" value="2.30 A"/>
    <property type="chains" value="A=2-448"/>
</dbReference>
<dbReference type="PDB" id="2O9P">
    <property type="method" value="X-ray"/>
    <property type="resolution" value="2.10 A"/>
    <property type="chains" value="A=2-448"/>
</dbReference>
<dbReference type="PDB" id="2O9R">
    <property type="method" value="X-ray"/>
    <property type="resolution" value="2.30 A"/>
    <property type="chains" value="A=4-448"/>
</dbReference>
<dbReference type="PDB" id="2O9T">
    <property type="method" value="X-ray"/>
    <property type="resolution" value="2.15 A"/>
    <property type="chains" value="A=2-448"/>
</dbReference>
<dbReference type="PDB" id="2Z1S">
    <property type="method" value="X-ray"/>
    <property type="resolution" value="2.46 A"/>
    <property type="chains" value="A=2-448"/>
</dbReference>
<dbReference type="PDBsum" id="2JIE"/>
<dbReference type="PDBsum" id="2O9P"/>
<dbReference type="PDBsum" id="2O9R"/>
<dbReference type="PDBsum" id="2O9T"/>
<dbReference type="PDBsum" id="2Z1S"/>
<dbReference type="SMR" id="P22505"/>
<dbReference type="CAZy" id="GH1">
    <property type="family name" value="Glycoside Hydrolase Family 1"/>
</dbReference>
<dbReference type="eggNOG" id="COG2723">
    <property type="taxonomic scope" value="Bacteria"/>
</dbReference>
<dbReference type="EvolutionaryTrace" id="P22505"/>
<dbReference type="GO" id="GO:0008422">
    <property type="term" value="F:beta-glucosidase activity"/>
    <property type="evidence" value="ECO:0007669"/>
    <property type="project" value="UniProtKB-EC"/>
</dbReference>
<dbReference type="GO" id="GO:0030245">
    <property type="term" value="P:cellulose catabolic process"/>
    <property type="evidence" value="ECO:0007669"/>
    <property type="project" value="UniProtKB-KW"/>
</dbReference>
<dbReference type="FunFam" id="3.20.20.80:FF:000004">
    <property type="entry name" value="Beta-glucosidase 6-phospho-beta-glucosidase"/>
    <property type="match status" value="1"/>
</dbReference>
<dbReference type="Gene3D" id="3.20.20.80">
    <property type="entry name" value="Glycosidases"/>
    <property type="match status" value="1"/>
</dbReference>
<dbReference type="InterPro" id="IPR001360">
    <property type="entry name" value="Glyco_hydro_1"/>
</dbReference>
<dbReference type="InterPro" id="IPR018120">
    <property type="entry name" value="Glyco_hydro_1_AS"/>
</dbReference>
<dbReference type="InterPro" id="IPR017736">
    <property type="entry name" value="Glyco_hydro_1_beta-glucosidase"/>
</dbReference>
<dbReference type="InterPro" id="IPR033132">
    <property type="entry name" value="Glyco_hydro_1_N_CS"/>
</dbReference>
<dbReference type="InterPro" id="IPR017853">
    <property type="entry name" value="Glycoside_hydrolase_SF"/>
</dbReference>
<dbReference type="NCBIfam" id="TIGR03356">
    <property type="entry name" value="BGL"/>
    <property type="match status" value="1"/>
</dbReference>
<dbReference type="PANTHER" id="PTHR10353">
    <property type="entry name" value="GLYCOSYL HYDROLASE"/>
    <property type="match status" value="1"/>
</dbReference>
<dbReference type="PANTHER" id="PTHR10353:SF36">
    <property type="entry name" value="LP05116P"/>
    <property type="match status" value="1"/>
</dbReference>
<dbReference type="Pfam" id="PF00232">
    <property type="entry name" value="Glyco_hydro_1"/>
    <property type="match status" value="1"/>
</dbReference>
<dbReference type="PRINTS" id="PR00131">
    <property type="entry name" value="GLHYDRLASE1"/>
</dbReference>
<dbReference type="SUPFAM" id="SSF51445">
    <property type="entry name" value="(Trans)glycosidases"/>
    <property type="match status" value="1"/>
</dbReference>
<dbReference type="PROSITE" id="PS00572">
    <property type="entry name" value="GLYCOSYL_HYDROL_F1_1"/>
    <property type="match status" value="1"/>
</dbReference>
<dbReference type="PROSITE" id="PS00653">
    <property type="entry name" value="GLYCOSYL_HYDROL_F1_2"/>
    <property type="match status" value="1"/>
</dbReference>
<accession>P22505</accession>
<proteinExistence type="evidence at protein level"/>
<name>BGLB_PAEPO</name>
<keyword id="KW-0002">3D-structure</keyword>
<keyword id="KW-0119">Carbohydrate metabolism</keyword>
<keyword id="KW-0136">Cellulose degradation</keyword>
<keyword id="KW-0326">Glycosidase</keyword>
<keyword id="KW-0378">Hydrolase</keyword>
<keyword id="KW-0624">Polysaccharide degradation</keyword>
<organism>
    <name type="scientific">Paenibacillus polymyxa</name>
    <name type="common">Bacillus polymyxa</name>
    <dbReference type="NCBI Taxonomy" id="1406"/>
    <lineage>
        <taxon>Bacteria</taxon>
        <taxon>Bacillati</taxon>
        <taxon>Bacillota</taxon>
        <taxon>Bacilli</taxon>
        <taxon>Bacillales</taxon>
        <taxon>Paenibacillaceae</taxon>
        <taxon>Paenibacillus</taxon>
    </lineage>
</organism>
<feature type="chain" id="PRO_0000063872" description="Beta-glucosidase B">
    <location>
        <begin position="1"/>
        <end position="448"/>
    </location>
</feature>
<feature type="active site" description="Proton donor" evidence="1">
    <location>
        <position position="167"/>
    </location>
</feature>
<feature type="active site" description="Nucleophile" evidence="2">
    <location>
        <position position="356"/>
    </location>
</feature>
<feature type="strand" evidence="4">
    <location>
        <begin position="13"/>
        <end position="17"/>
    </location>
</feature>
<feature type="helix" evidence="4">
    <location>
        <begin position="20"/>
        <end position="23"/>
    </location>
</feature>
<feature type="helix" evidence="4">
    <location>
        <begin position="36"/>
        <end position="40"/>
    </location>
</feature>
<feature type="helix" evidence="4">
    <location>
        <begin position="48"/>
        <end position="50"/>
    </location>
</feature>
<feature type="strand" evidence="4">
    <location>
        <begin position="53"/>
        <end position="55"/>
    </location>
</feature>
<feature type="helix" evidence="4">
    <location>
        <begin position="59"/>
        <end position="71"/>
    </location>
</feature>
<feature type="turn" evidence="4">
    <location>
        <begin position="72"/>
        <end position="74"/>
    </location>
</feature>
<feature type="strand" evidence="4">
    <location>
        <begin position="77"/>
        <end position="81"/>
    </location>
</feature>
<feature type="helix" evidence="4">
    <location>
        <begin position="84"/>
        <end position="87"/>
    </location>
</feature>
<feature type="helix" evidence="4">
    <location>
        <begin position="96"/>
        <end position="112"/>
    </location>
</feature>
<feature type="strand" evidence="4">
    <location>
        <begin position="115"/>
        <end position="123"/>
    </location>
</feature>
<feature type="helix" evidence="4">
    <location>
        <begin position="127"/>
        <end position="131"/>
    </location>
</feature>
<feature type="helix" evidence="4">
    <location>
        <begin position="134"/>
        <end position="136"/>
    </location>
</feature>
<feature type="helix" evidence="4">
    <location>
        <begin position="139"/>
        <end position="154"/>
    </location>
</feature>
<feature type="strand" evidence="4">
    <location>
        <begin position="155"/>
        <end position="158"/>
    </location>
</feature>
<feature type="strand" evidence="4">
    <location>
        <begin position="160"/>
        <end position="166"/>
    </location>
</feature>
<feature type="helix" evidence="4">
    <location>
        <begin position="168"/>
        <end position="176"/>
    </location>
</feature>
<feature type="strand" evidence="4">
    <location>
        <begin position="178"/>
        <end position="181"/>
    </location>
</feature>
<feature type="helix" evidence="4">
    <location>
        <begin position="188"/>
        <end position="211"/>
    </location>
</feature>
<feature type="strand" evidence="4">
    <location>
        <begin position="216"/>
        <end position="223"/>
    </location>
</feature>
<feature type="strand" evidence="4">
    <location>
        <begin position="226"/>
        <end position="232"/>
    </location>
</feature>
<feature type="helix" evidence="4">
    <location>
        <begin position="234"/>
        <end position="247"/>
    </location>
</feature>
<feature type="helix" evidence="4">
    <location>
        <begin position="249"/>
        <end position="257"/>
    </location>
</feature>
<feature type="helix" evidence="4">
    <location>
        <begin position="262"/>
        <end position="268"/>
    </location>
</feature>
<feature type="helix" evidence="4">
    <location>
        <begin position="269"/>
        <end position="275"/>
    </location>
</feature>
<feature type="helix" evidence="4">
    <location>
        <begin position="282"/>
        <end position="286"/>
    </location>
</feature>
<feature type="strand" evidence="4">
    <location>
        <begin position="292"/>
        <end position="296"/>
    </location>
</feature>
<feature type="strand" evidence="4">
    <location>
        <begin position="300"/>
        <end position="305"/>
    </location>
</feature>
<feature type="strand" evidence="4">
    <location>
        <begin position="308"/>
        <end position="312"/>
    </location>
</feature>
<feature type="strand" evidence="4">
    <location>
        <begin position="314"/>
        <end position="316"/>
    </location>
</feature>
<feature type="strand" evidence="4">
    <location>
        <begin position="321"/>
        <end position="323"/>
    </location>
</feature>
<feature type="helix" evidence="4">
    <location>
        <begin position="332"/>
        <end position="344"/>
    </location>
</feature>
<feature type="turn" evidence="4">
    <location>
        <begin position="345"/>
        <end position="349"/>
    </location>
</feature>
<feature type="strand" evidence="4">
    <location>
        <begin position="352"/>
        <end position="357"/>
    </location>
</feature>
<feature type="helix" evidence="4">
    <location>
        <begin position="373"/>
        <end position="389"/>
    </location>
</feature>
<feature type="turn" evidence="4">
    <location>
        <begin position="390"/>
        <end position="393"/>
    </location>
</feature>
<feature type="strand" evidence="4">
    <location>
        <begin position="396"/>
        <end position="402"/>
    </location>
</feature>
<feature type="helix" evidence="4">
    <location>
        <begin position="410"/>
        <end position="415"/>
    </location>
</feature>
<feature type="strand" evidence="4">
    <location>
        <begin position="420"/>
        <end position="423"/>
    </location>
</feature>
<feature type="turn" evidence="4">
    <location>
        <begin position="425"/>
        <end position="427"/>
    </location>
</feature>
<feature type="strand" evidence="4">
    <location>
        <begin position="430"/>
        <end position="432"/>
    </location>
</feature>
<feature type="helix" evidence="4">
    <location>
        <begin position="434"/>
        <end position="445"/>
    </location>
</feature>